<dbReference type="EMBL" id="AB512490">
    <property type="protein sequence ID" value="BAI52979.1"/>
    <property type="molecule type" value="Genomic_DNA"/>
</dbReference>
<dbReference type="EMBL" id="AP008208">
    <property type="protein sequence ID" value="BAF07916.1"/>
    <property type="molecule type" value="Genomic_DNA"/>
</dbReference>
<dbReference type="EMBL" id="AP014958">
    <property type="protein sequence ID" value="BAS77155.1"/>
    <property type="molecule type" value="Genomic_DNA"/>
</dbReference>
<dbReference type="EMBL" id="AK106854">
    <property type="status" value="NOT_ANNOTATED_CDS"/>
    <property type="molecule type" value="mRNA"/>
</dbReference>
<dbReference type="SMR" id="Q0E3M2"/>
<dbReference type="PaxDb" id="39947-Q0E3M2"/>
<dbReference type="EnsemblPlants" id="Os02t0166800-01">
    <property type="protein sequence ID" value="Os02t0166800-01"/>
    <property type="gene ID" value="Os02g0166800"/>
</dbReference>
<dbReference type="Gramene" id="Os02t0166800-01">
    <property type="protein sequence ID" value="Os02t0166800-01"/>
    <property type="gene ID" value="Os02g0166800"/>
</dbReference>
<dbReference type="KEGG" id="dosa:Os02g0166800"/>
<dbReference type="eggNOG" id="ENOG502QT0B">
    <property type="taxonomic scope" value="Eukaryota"/>
</dbReference>
<dbReference type="HOGENOM" id="CLU_071168_1_0_1"/>
<dbReference type="InParanoid" id="Q0E3M2"/>
<dbReference type="OMA" id="HHLFMPH"/>
<dbReference type="Proteomes" id="UP000000763">
    <property type="component" value="Chromosome 2"/>
</dbReference>
<dbReference type="Proteomes" id="UP000059680">
    <property type="component" value="Chromosome 2"/>
</dbReference>
<dbReference type="GO" id="GO:0005634">
    <property type="term" value="C:nucleus"/>
    <property type="evidence" value="ECO:0000250"/>
    <property type="project" value="UniProtKB"/>
</dbReference>
<dbReference type="GO" id="GO:0003677">
    <property type="term" value="F:DNA binding"/>
    <property type="evidence" value="ECO:0007669"/>
    <property type="project" value="UniProtKB-KW"/>
</dbReference>
<dbReference type="GO" id="GO:0009299">
    <property type="term" value="P:mRNA transcription"/>
    <property type="evidence" value="ECO:0000250"/>
    <property type="project" value="UniProtKB"/>
</dbReference>
<dbReference type="GO" id="GO:0090698">
    <property type="term" value="P:post-embryonic plant morphogenesis"/>
    <property type="evidence" value="ECO:0000250"/>
    <property type="project" value="UniProtKB"/>
</dbReference>
<dbReference type="GO" id="GO:0009416">
    <property type="term" value="P:response to light stimulus"/>
    <property type="evidence" value="ECO:0000318"/>
    <property type="project" value="GO_Central"/>
</dbReference>
<dbReference type="InterPro" id="IPR040222">
    <property type="entry name" value="ALOG"/>
</dbReference>
<dbReference type="InterPro" id="IPR006936">
    <property type="entry name" value="ALOG_dom"/>
</dbReference>
<dbReference type="PANTHER" id="PTHR31165:SF122">
    <property type="entry name" value="PROTEIN G1-LIKE1"/>
    <property type="match status" value="1"/>
</dbReference>
<dbReference type="PANTHER" id="PTHR31165">
    <property type="entry name" value="PROTEIN G1-LIKE2"/>
    <property type="match status" value="1"/>
</dbReference>
<dbReference type="Pfam" id="PF04852">
    <property type="entry name" value="ALOG_dom"/>
    <property type="match status" value="1"/>
</dbReference>
<dbReference type="PROSITE" id="PS51697">
    <property type="entry name" value="ALOG"/>
    <property type="match status" value="1"/>
</dbReference>
<organism>
    <name type="scientific">Oryza sativa subsp. japonica</name>
    <name type="common">Rice</name>
    <dbReference type="NCBI Taxonomy" id="39947"/>
    <lineage>
        <taxon>Eukaryota</taxon>
        <taxon>Viridiplantae</taxon>
        <taxon>Streptophyta</taxon>
        <taxon>Embryophyta</taxon>
        <taxon>Tracheophyta</taxon>
        <taxon>Spermatophyta</taxon>
        <taxon>Magnoliopsida</taxon>
        <taxon>Liliopsida</taxon>
        <taxon>Poales</taxon>
        <taxon>Poaceae</taxon>
        <taxon>BOP clade</taxon>
        <taxon>Oryzoideae</taxon>
        <taxon>Oryzeae</taxon>
        <taxon>Oryzinae</taxon>
        <taxon>Oryza</taxon>
        <taxon>Oryza sativa</taxon>
    </lineage>
</organism>
<protein>
    <recommendedName>
        <fullName>Protein G1-like1</fullName>
    </recommendedName>
</protein>
<accession>Q0E3M2</accession>
<accession>A0A0P0VF52</accession>
<proteinExistence type="evidence at protein level"/>
<keyword id="KW-0175">Coiled coil</keyword>
<keyword id="KW-0217">Developmental protein</keyword>
<keyword id="KW-0238">DNA-binding</keyword>
<keyword id="KW-0539">Nucleus</keyword>
<keyword id="KW-1185">Reference proteome</keyword>
<keyword id="KW-0804">Transcription</keyword>
<keyword id="KW-0805">Transcription regulation</keyword>
<name>G1L1_ORYSJ</name>
<sequence>MDMIGMASPAESPGGGGTARPSRYESQKRRDWQTFGQYLRNHRPPLELSRCSGAHVLEFLRYLDQFGKTKVHAHGCPFFGHPSPPAPCPCPLRQAWGSLDALVGRLRAAFEEHGGRPESNPFGARAVRLYLRDIRDTQSKARGIAYEKKRRKRAAASHTKQKQQQQQLVEQAAAAAEAHAAGCMMPLSVFN</sequence>
<feature type="chain" id="PRO_0000425299" description="Protein G1-like1">
    <location>
        <begin position="1"/>
        <end position="191"/>
    </location>
</feature>
<feature type="domain" description="ALOG" evidence="3">
    <location>
        <begin position="23"/>
        <end position="150"/>
    </location>
</feature>
<feature type="region of interest" description="Disordered" evidence="4">
    <location>
        <begin position="1"/>
        <end position="29"/>
    </location>
</feature>
<feature type="coiled-coil region" evidence="2">
    <location>
        <begin position="152"/>
        <end position="179"/>
    </location>
</feature>
<feature type="short sequence motif" description="Nuclear localization signal" evidence="1">
    <location>
        <begin position="148"/>
        <end position="152"/>
    </location>
</feature>
<reference key="1">
    <citation type="journal article" date="2009" name="Proc. Natl. Acad. Sci. U.S.A.">
        <title>The homeotic gene long sterile lemma (G1) specifies sterile lemma identity in the rice spikelet.</title>
        <authorList>
            <person name="Yoshida A."/>
            <person name="Suzaki Y."/>
            <person name="Tanaka W."/>
            <person name="Hirano H.-Y."/>
        </authorList>
    </citation>
    <scope>NUCLEOTIDE SEQUENCE [GENOMIC DNA]</scope>
    <scope>GENE FAMILY</scope>
    <scope>NOMENCLATURE</scope>
    <source>
        <strain>cv. Nipponbare</strain>
    </source>
</reference>
<reference key="2">
    <citation type="journal article" date="2005" name="Nature">
        <title>The map-based sequence of the rice genome.</title>
        <authorList>
            <consortium name="International rice genome sequencing project (IRGSP)"/>
        </authorList>
    </citation>
    <scope>NUCLEOTIDE SEQUENCE [LARGE SCALE GENOMIC DNA]</scope>
    <source>
        <strain>cv. Nipponbare</strain>
    </source>
</reference>
<reference key="3">
    <citation type="journal article" date="2008" name="Nucleic Acids Res.">
        <title>The rice annotation project database (RAP-DB): 2008 update.</title>
        <authorList>
            <consortium name="The rice annotation project (RAP)"/>
        </authorList>
    </citation>
    <scope>GENOME REANNOTATION</scope>
    <source>
        <strain>cv. Nipponbare</strain>
    </source>
</reference>
<reference key="4">
    <citation type="journal article" date="2013" name="Rice">
        <title>Improvement of the Oryza sativa Nipponbare reference genome using next generation sequence and optical map data.</title>
        <authorList>
            <person name="Kawahara Y."/>
            <person name="de la Bastide M."/>
            <person name="Hamilton J.P."/>
            <person name="Kanamori H."/>
            <person name="McCombie W.R."/>
            <person name="Ouyang S."/>
            <person name="Schwartz D.C."/>
            <person name="Tanaka T."/>
            <person name="Wu J."/>
            <person name="Zhou S."/>
            <person name="Childs K.L."/>
            <person name="Davidson R.M."/>
            <person name="Lin H."/>
            <person name="Quesada-Ocampo L."/>
            <person name="Vaillancourt B."/>
            <person name="Sakai H."/>
            <person name="Lee S.S."/>
            <person name="Kim J."/>
            <person name="Numa H."/>
            <person name="Itoh T."/>
            <person name="Buell C.R."/>
            <person name="Matsumoto T."/>
        </authorList>
    </citation>
    <scope>GENOME REANNOTATION</scope>
    <source>
        <strain>cv. Nipponbare</strain>
    </source>
</reference>
<reference key="5">
    <citation type="journal article" date="2003" name="Science">
        <title>Collection, mapping, and annotation of over 28,000 cDNA clones from japonica rice.</title>
        <authorList>
            <consortium name="The rice full-length cDNA consortium"/>
        </authorList>
    </citation>
    <scope>NUCLEOTIDE SEQUENCE [LARGE SCALE MRNA]</scope>
    <source>
        <strain>cv. Nipponbare</strain>
    </source>
</reference>
<reference key="6">
    <citation type="journal article" date="2012" name="Biol. Direct">
        <title>ALOG domains: provenance of plant homeotic and developmental regulators from the DNA-binding domain of a novel class of DIRS1-type retroposons.</title>
        <authorList>
            <person name="Iyer L.M."/>
            <person name="Aravind L."/>
        </authorList>
    </citation>
    <scope>DNA-BINDING</scope>
    <scope>GENE FAMILY</scope>
</reference>
<comment type="function">
    <text evidence="1">Probable transcription regulator that acts as a developmental regulator by promoting cell growth in response to light.</text>
</comment>
<comment type="subcellular location">
    <subcellularLocation>
        <location evidence="1">Nucleus</location>
    </subcellularLocation>
</comment>
<comment type="similarity">
    <text evidence="5">Belongs to the plant homeotic and developmental regulators ALOG protein family.</text>
</comment>
<evidence type="ECO:0000250" key="1"/>
<evidence type="ECO:0000255" key="2"/>
<evidence type="ECO:0000255" key="3">
    <source>
        <dbReference type="PROSITE-ProRule" id="PRU01033"/>
    </source>
</evidence>
<evidence type="ECO:0000256" key="4">
    <source>
        <dbReference type="SAM" id="MobiDB-lite"/>
    </source>
</evidence>
<evidence type="ECO:0000305" key="5"/>
<gene>
    <name type="primary">G1L1</name>
    <name type="ordered locus">Os02g0166800</name>
    <name type="ordered locus">LOC_Os02g07030</name>
</gene>